<gene>
    <name evidence="4" type="primary">Mmaa</name>
</gene>
<feature type="transit peptide" description="Mitochondrion" evidence="2">
    <location>
        <begin position="1"/>
        <end position="62"/>
    </location>
</feature>
<feature type="chain" id="PRO_0000002286" description="Methylmalonic aciduria type A homolog, mitochondrial">
    <location>
        <begin position="63"/>
        <end position="415"/>
    </location>
</feature>
<feature type="binding site" evidence="1">
    <location>
        <begin position="147"/>
        <end position="155"/>
    </location>
    <ligand>
        <name>GTP</name>
        <dbReference type="ChEBI" id="CHEBI:37565"/>
    </ligand>
</feature>
<feature type="binding site" evidence="1">
    <location>
        <position position="289"/>
    </location>
    <ligand>
        <name>GTP</name>
        <dbReference type="ChEBI" id="CHEBI:37565"/>
    </ligand>
</feature>
<feature type="binding site" evidence="1">
    <location>
        <begin position="325"/>
        <end position="327"/>
    </location>
    <ligand>
        <name>GTP</name>
        <dbReference type="ChEBI" id="CHEBI:37565"/>
    </ligand>
</feature>
<feature type="sequence conflict" description="In Ref. 2; AAH21954." evidence="3" ref="2">
    <original>H</original>
    <variation>P</variation>
    <location>
        <position position="31"/>
    </location>
</feature>
<sequence length="415" mass="45932">MTISTLLLSPNRRLLTCLSRVPSPWLLHSSHPAPGPPGALPNCFGHHCTKRVLLSDGFRRTLCVQATLKDHTEGLSDKEQRFVDRLYTGLVKGQRACLAEAITLVESTHTRKRELAQVLLQRVLALQREQELRNQGKPLTFRVGLSGPPGAGKSTFIECFGKMLTEQGHRLSVLAVDPSSCTSGGSLLGDKTRMIELSRDMNAYIRPSPTSGTLGGVTRTTNEAIVLCEGGGYDIILIETVGVGQSEFAVADMVDMFVLLLPPAGGDELQGIKRGIIEMADLVVITKSDGDLIVPARRIQAEYVSALKLLRRRSEVWRPKVIRISARSGEGITEMWDTMREFQHQMLASGELAAKRQTQHKVWMWNLIQENVLEHFKTHPSIREQIPLMERKVLSGALSPGRAADLLLKAFKSRH</sequence>
<evidence type="ECO:0000250" key="1">
    <source>
        <dbReference type="UniProtKB" id="Q8IVH4"/>
    </source>
</evidence>
<evidence type="ECO:0000255" key="2"/>
<evidence type="ECO:0000305" key="3"/>
<evidence type="ECO:0000312" key="4">
    <source>
        <dbReference type="MGI" id="MGI:1923805"/>
    </source>
</evidence>
<proteinExistence type="evidence at protein level"/>
<dbReference type="EC" id="3.6.-.-" evidence="1"/>
<dbReference type="EMBL" id="AK050255">
    <property type="protein sequence ID" value="BAC34149.1"/>
    <property type="molecule type" value="mRNA"/>
</dbReference>
<dbReference type="EMBL" id="BC021954">
    <property type="protein sequence ID" value="AAH21954.1"/>
    <property type="molecule type" value="mRNA"/>
</dbReference>
<dbReference type="EMBL" id="BC027398">
    <property type="protein sequence ID" value="AAH27398.1"/>
    <property type="molecule type" value="mRNA"/>
</dbReference>
<dbReference type="CCDS" id="CCDS22436.1"/>
<dbReference type="RefSeq" id="NP_001350399.1">
    <property type="nucleotide sequence ID" value="NM_001363470.1"/>
</dbReference>
<dbReference type="RefSeq" id="NP_598584.2">
    <property type="nucleotide sequence ID" value="NM_133823.4"/>
</dbReference>
<dbReference type="RefSeq" id="XP_006530625.1">
    <property type="nucleotide sequence ID" value="XM_006530562.3"/>
</dbReference>
<dbReference type="RefSeq" id="XP_006530626.1">
    <property type="nucleotide sequence ID" value="XM_006530563.4"/>
</dbReference>
<dbReference type="RefSeq" id="XP_006530627.1">
    <property type="nucleotide sequence ID" value="XM_006530564.5"/>
</dbReference>
<dbReference type="RefSeq" id="XP_011246563.1">
    <property type="nucleotide sequence ID" value="XM_011248261.4"/>
</dbReference>
<dbReference type="RefSeq" id="XP_011246564.1">
    <property type="nucleotide sequence ID" value="XM_011248262.4"/>
</dbReference>
<dbReference type="RefSeq" id="XP_011246565.1">
    <property type="nucleotide sequence ID" value="XM_011248263.4"/>
</dbReference>
<dbReference type="RefSeq" id="XP_011246566.1">
    <property type="nucleotide sequence ID" value="XM_011248264.4"/>
</dbReference>
<dbReference type="RefSeq" id="XP_011246567.1">
    <property type="nucleotide sequence ID" value="XM_011248265.4"/>
</dbReference>
<dbReference type="RefSeq" id="XP_011246568.1">
    <property type="nucleotide sequence ID" value="XM_011248266.4"/>
</dbReference>
<dbReference type="RefSeq" id="XP_011246569.1">
    <property type="nucleotide sequence ID" value="XM_011248267.4"/>
</dbReference>
<dbReference type="RefSeq" id="XP_011246570.1">
    <property type="nucleotide sequence ID" value="XM_011248268.4"/>
</dbReference>
<dbReference type="RefSeq" id="XP_011246571.1">
    <property type="nucleotide sequence ID" value="XM_011248269.4"/>
</dbReference>
<dbReference type="RefSeq" id="XP_011246572.1">
    <property type="nucleotide sequence ID" value="XM_011248270.4"/>
</dbReference>
<dbReference type="RefSeq" id="XP_017167993.1">
    <property type="nucleotide sequence ID" value="XM_017312504.1"/>
</dbReference>
<dbReference type="RefSeq" id="XP_017167994.1">
    <property type="nucleotide sequence ID" value="XM_017312505.1"/>
</dbReference>
<dbReference type="RefSeq" id="XP_030099092.1">
    <property type="nucleotide sequence ID" value="XM_030243232.2"/>
</dbReference>
<dbReference type="RefSeq" id="XP_030099093.1">
    <property type="nucleotide sequence ID" value="XM_030243233.1"/>
</dbReference>
<dbReference type="RefSeq" id="XP_036009605.1">
    <property type="nucleotide sequence ID" value="XM_036153712.1"/>
</dbReference>
<dbReference type="RefSeq" id="XP_036009606.1">
    <property type="nucleotide sequence ID" value="XM_036153713.1"/>
</dbReference>
<dbReference type="SMR" id="Q8C7H1"/>
<dbReference type="BioGRID" id="224569">
    <property type="interactions" value="3"/>
</dbReference>
<dbReference type="FunCoup" id="Q8C7H1">
    <property type="interactions" value="548"/>
</dbReference>
<dbReference type="STRING" id="10090.ENSMUSP00000048826"/>
<dbReference type="GlyGen" id="Q8C7H1">
    <property type="glycosylation" value="1 site"/>
</dbReference>
<dbReference type="iPTMnet" id="Q8C7H1"/>
<dbReference type="PhosphoSitePlus" id="Q8C7H1"/>
<dbReference type="SwissPalm" id="Q8C7H1"/>
<dbReference type="jPOST" id="Q8C7H1"/>
<dbReference type="PaxDb" id="10090-ENSMUSP00000048826"/>
<dbReference type="PeptideAtlas" id="Q8C7H1"/>
<dbReference type="ProteomicsDB" id="295957"/>
<dbReference type="Pumba" id="Q8C7H1"/>
<dbReference type="Antibodypedia" id="27481">
    <property type="antibodies" value="157 antibodies from 19 providers"/>
</dbReference>
<dbReference type="DNASU" id="109136"/>
<dbReference type="Ensembl" id="ENSMUST00000048718.4">
    <property type="protein sequence ID" value="ENSMUSP00000048826.3"/>
    <property type="gene ID" value="ENSMUSG00000037022.4"/>
</dbReference>
<dbReference type="GeneID" id="109136"/>
<dbReference type="KEGG" id="mmu:109136"/>
<dbReference type="UCSC" id="uc009mim.1">
    <property type="organism name" value="mouse"/>
</dbReference>
<dbReference type="AGR" id="MGI:1923805"/>
<dbReference type="CTD" id="166785"/>
<dbReference type="MGI" id="MGI:1923805">
    <property type="gene designation" value="Mmaa"/>
</dbReference>
<dbReference type="VEuPathDB" id="HostDB:ENSMUSG00000037022"/>
<dbReference type="eggNOG" id="ENOG502QR2W">
    <property type="taxonomic scope" value="Eukaryota"/>
</dbReference>
<dbReference type="GeneTree" id="ENSGT00390000009908"/>
<dbReference type="HOGENOM" id="CLU_043725_2_2_1"/>
<dbReference type="InParanoid" id="Q8C7H1"/>
<dbReference type="OMA" id="WMWERID"/>
<dbReference type="OrthoDB" id="1476984at2759"/>
<dbReference type="PhylomeDB" id="Q8C7H1"/>
<dbReference type="TreeFam" id="TF313243"/>
<dbReference type="Reactome" id="R-MMU-71032">
    <property type="pathway name" value="Propionyl-CoA catabolism"/>
</dbReference>
<dbReference type="Reactome" id="R-MMU-9759218">
    <property type="pathway name" value="Cobalamin (Cbl) metabolism"/>
</dbReference>
<dbReference type="BioGRID-ORCS" id="109136">
    <property type="hits" value="3 hits in 79 CRISPR screens"/>
</dbReference>
<dbReference type="ChiTaRS" id="Mmaa">
    <property type="organism name" value="mouse"/>
</dbReference>
<dbReference type="PRO" id="PR:Q8C7H1"/>
<dbReference type="Proteomes" id="UP000000589">
    <property type="component" value="Chromosome 8"/>
</dbReference>
<dbReference type="RNAct" id="Q8C7H1">
    <property type="molecule type" value="protein"/>
</dbReference>
<dbReference type="Bgee" id="ENSMUSG00000037022">
    <property type="expression patterns" value="Expressed in interventricular septum and 241 other cell types or tissues"/>
</dbReference>
<dbReference type="ExpressionAtlas" id="Q8C7H1">
    <property type="expression patterns" value="baseline and differential"/>
</dbReference>
<dbReference type="GO" id="GO:0005737">
    <property type="term" value="C:cytoplasm"/>
    <property type="evidence" value="ECO:0000250"/>
    <property type="project" value="UniProtKB"/>
</dbReference>
<dbReference type="GO" id="GO:0005829">
    <property type="term" value="C:cytosol"/>
    <property type="evidence" value="ECO:0007669"/>
    <property type="project" value="Ensembl"/>
</dbReference>
<dbReference type="GO" id="GO:0005739">
    <property type="term" value="C:mitochondrion"/>
    <property type="evidence" value="ECO:0000250"/>
    <property type="project" value="UniProtKB"/>
</dbReference>
<dbReference type="GO" id="GO:0016887">
    <property type="term" value="F:ATP hydrolysis activity"/>
    <property type="evidence" value="ECO:0007669"/>
    <property type="project" value="InterPro"/>
</dbReference>
<dbReference type="GO" id="GO:0005525">
    <property type="term" value="F:GTP binding"/>
    <property type="evidence" value="ECO:0000250"/>
    <property type="project" value="UniProtKB"/>
</dbReference>
<dbReference type="GO" id="GO:0003924">
    <property type="term" value="F:GTPase activity"/>
    <property type="evidence" value="ECO:0000250"/>
    <property type="project" value="UniProtKB"/>
</dbReference>
<dbReference type="GO" id="GO:0042802">
    <property type="term" value="F:identical protein binding"/>
    <property type="evidence" value="ECO:0000250"/>
    <property type="project" value="UniProtKB"/>
</dbReference>
<dbReference type="GO" id="GO:0140104">
    <property type="term" value="F:molecular carrier activity"/>
    <property type="evidence" value="ECO:0000266"/>
    <property type="project" value="MGI"/>
</dbReference>
<dbReference type="GO" id="GO:0042803">
    <property type="term" value="F:protein homodimerization activity"/>
    <property type="evidence" value="ECO:0000250"/>
    <property type="project" value="UniProtKB"/>
</dbReference>
<dbReference type="GO" id="GO:0009235">
    <property type="term" value="P:cobalamin metabolic process"/>
    <property type="evidence" value="ECO:0000266"/>
    <property type="project" value="MGI"/>
</dbReference>
<dbReference type="CDD" id="cd03114">
    <property type="entry name" value="MMAA-like"/>
    <property type="match status" value="1"/>
</dbReference>
<dbReference type="FunFam" id="3.40.50.300:FF:000647">
    <property type="entry name" value="Methylmalonic aciduria type A homolog, mitochondrial"/>
    <property type="match status" value="1"/>
</dbReference>
<dbReference type="Gene3D" id="1.10.287.130">
    <property type="match status" value="1"/>
</dbReference>
<dbReference type="Gene3D" id="1.20.5.170">
    <property type="match status" value="1"/>
</dbReference>
<dbReference type="Gene3D" id="3.40.50.300">
    <property type="entry name" value="P-loop containing nucleotide triphosphate hydrolases"/>
    <property type="match status" value="1"/>
</dbReference>
<dbReference type="InterPro" id="IPR003593">
    <property type="entry name" value="AAA+_ATPase"/>
</dbReference>
<dbReference type="InterPro" id="IPR005129">
    <property type="entry name" value="GTPase_ArgK"/>
</dbReference>
<dbReference type="InterPro" id="IPR027417">
    <property type="entry name" value="P-loop_NTPase"/>
</dbReference>
<dbReference type="NCBIfam" id="TIGR00750">
    <property type="entry name" value="lao"/>
    <property type="match status" value="1"/>
</dbReference>
<dbReference type="NCBIfam" id="NF006958">
    <property type="entry name" value="PRK09435.1"/>
    <property type="match status" value="1"/>
</dbReference>
<dbReference type="PANTHER" id="PTHR23408:SF3">
    <property type="entry name" value="METHYLMALONIC ACIDURIA TYPE A PROTEIN, MITOCHONDRIAL"/>
    <property type="match status" value="1"/>
</dbReference>
<dbReference type="PANTHER" id="PTHR23408">
    <property type="entry name" value="METHYLMALONYL-COA MUTASE"/>
    <property type="match status" value="1"/>
</dbReference>
<dbReference type="Pfam" id="PF03308">
    <property type="entry name" value="MeaB"/>
    <property type="match status" value="1"/>
</dbReference>
<dbReference type="SMART" id="SM00382">
    <property type="entry name" value="AAA"/>
    <property type="match status" value="1"/>
</dbReference>
<dbReference type="SUPFAM" id="SSF52540">
    <property type="entry name" value="P-loop containing nucleoside triphosphate hydrolases"/>
    <property type="match status" value="1"/>
</dbReference>
<reference key="1">
    <citation type="journal article" date="2005" name="Science">
        <title>The transcriptional landscape of the mammalian genome.</title>
        <authorList>
            <person name="Carninci P."/>
            <person name="Kasukawa T."/>
            <person name="Katayama S."/>
            <person name="Gough J."/>
            <person name="Frith M.C."/>
            <person name="Maeda N."/>
            <person name="Oyama R."/>
            <person name="Ravasi T."/>
            <person name="Lenhard B."/>
            <person name="Wells C."/>
            <person name="Kodzius R."/>
            <person name="Shimokawa K."/>
            <person name="Bajic V.B."/>
            <person name="Brenner S.E."/>
            <person name="Batalov S."/>
            <person name="Forrest A.R."/>
            <person name="Zavolan M."/>
            <person name="Davis M.J."/>
            <person name="Wilming L.G."/>
            <person name="Aidinis V."/>
            <person name="Allen J.E."/>
            <person name="Ambesi-Impiombato A."/>
            <person name="Apweiler R."/>
            <person name="Aturaliya R.N."/>
            <person name="Bailey T.L."/>
            <person name="Bansal M."/>
            <person name="Baxter L."/>
            <person name="Beisel K.W."/>
            <person name="Bersano T."/>
            <person name="Bono H."/>
            <person name="Chalk A.M."/>
            <person name="Chiu K.P."/>
            <person name="Choudhary V."/>
            <person name="Christoffels A."/>
            <person name="Clutterbuck D.R."/>
            <person name="Crowe M.L."/>
            <person name="Dalla E."/>
            <person name="Dalrymple B.P."/>
            <person name="de Bono B."/>
            <person name="Della Gatta G."/>
            <person name="di Bernardo D."/>
            <person name="Down T."/>
            <person name="Engstrom P."/>
            <person name="Fagiolini M."/>
            <person name="Faulkner G."/>
            <person name="Fletcher C.F."/>
            <person name="Fukushima T."/>
            <person name="Furuno M."/>
            <person name="Futaki S."/>
            <person name="Gariboldi M."/>
            <person name="Georgii-Hemming P."/>
            <person name="Gingeras T.R."/>
            <person name="Gojobori T."/>
            <person name="Green R.E."/>
            <person name="Gustincich S."/>
            <person name="Harbers M."/>
            <person name="Hayashi Y."/>
            <person name="Hensch T.K."/>
            <person name="Hirokawa N."/>
            <person name="Hill D."/>
            <person name="Huminiecki L."/>
            <person name="Iacono M."/>
            <person name="Ikeo K."/>
            <person name="Iwama A."/>
            <person name="Ishikawa T."/>
            <person name="Jakt M."/>
            <person name="Kanapin A."/>
            <person name="Katoh M."/>
            <person name="Kawasawa Y."/>
            <person name="Kelso J."/>
            <person name="Kitamura H."/>
            <person name="Kitano H."/>
            <person name="Kollias G."/>
            <person name="Krishnan S.P."/>
            <person name="Kruger A."/>
            <person name="Kummerfeld S.K."/>
            <person name="Kurochkin I.V."/>
            <person name="Lareau L.F."/>
            <person name="Lazarevic D."/>
            <person name="Lipovich L."/>
            <person name="Liu J."/>
            <person name="Liuni S."/>
            <person name="McWilliam S."/>
            <person name="Madan Babu M."/>
            <person name="Madera M."/>
            <person name="Marchionni L."/>
            <person name="Matsuda H."/>
            <person name="Matsuzawa S."/>
            <person name="Miki H."/>
            <person name="Mignone F."/>
            <person name="Miyake S."/>
            <person name="Morris K."/>
            <person name="Mottagui-Tabar S."/>
            <person name="Mulder N."/>
            <person name="Nakano N."/>
            <person name="Nakauchi H."/>
            <person name="Ng P."/>
            <person name="Nilsson R."/>
            <person name="Nishiguchi S."/>
            <person name="Nishikawa S."/>
            <person name="Nori F."/>
            <person name="Ohara O."/>
            <person name="Okazaki Y."/>
            <person name="Orlando V."/>
            <person name="Pang K.C."/>
            <person name="Pavan W.J."/>
            <person name="Pavesi G."/>
            <person name="Pesole G."/>
            <person name="Petrovsky N."/>
            <person name="Piazza S."/>
            <person name="Reed J."/>
            <person name="Reid J.F."/>
            <person name="Ring B.Z."/>
            <person name="Ringwald M."/>
            <person name="Rost B."/>
            <person name="Ruan Y."/>
            <person name="Salzberg S.L."/>
            <person name="Sandelin A."/>
            <person name="Schneider C."/>
            <person name="Schoenbach C."/>
            <person name="Sekiguchi K."/>
            <person name="Semple C.A."/>
            <person name="Seno S."/>
            <person name="Sessa L."/>
            <person name="Sheng Y."/>
            <person name="Shibata Y."/>
            <person name="Shimada H."/>
            <person name="Shimada K."/>
            <person name="Silva D."/>
            <person name="Sinclair B."/>
            <person name="Sperling S."/>
            <person name="Stupka E."/>
            <person name="Sugiura K."/>
            <person name="Sultana R."/>
            <person name="Takenaka Y."/>
            <person name="Taki K."/>
            <person name="Tammoja K."/>
            <person name="Tan S.L."/>
            <person name="Tang S."/>
            <person name="Taylor M.S."/>
            <person name="Tegner J."/>
            <person name="Teichmann S.A."/>
            <person name="Ueda H.R."/>
            <person name="van Nimwegen E."/>
            <person name="Verardo R."/>
            <person name="Wei C.L."/>
            <person name="Yagi K."/>
            <person name="Yamanishi H."/>
            <person name="Zabarovsky E."/>
            <person name="Zhu S."/>
            <person name="Zimmer A."/>
            <person name="Hide W."/>
            <person name="Bult C."/>
            <person name="Grimmond S.M."/>
            <person name="Teasdale R.D."/>
            <person name="Liu E.T."/>
            <person name="Brusic V."/>
            <person name="Quackenbush J."/>
            <person name="Wahlestedt C."/>
            <person name="Mattick J.S."/>
            <person name="Hume D.A."/>
            <person name="Kai C."/>
            <person name="Sasaki D."/>
            <person name="Tomaru Y."/>
            <person name="Fukuda S."/>
            <person name="Kanamori-Katayama M."/>
            <person name="Suzuki M."/>
            <person name="Aoki J."/>
            <person name="Arakawa T."/>
            <person name="Iida J."/>
            <person name="Imamura K."/>
            <person name="Itoh M."/>
            <person name="Kato T."/>
            <person name="Kawaji H."/>
            <person name="Kawagashira N."/>
            <person name="Kawashima T."/>
            <person name="Kojima M."/>
            <person name="Kondo S."/>
            <person name="Konno H."/>
            <person name="Nakano K."/>
            <person name="Ninomiya N."/>
            <person name="Nishio T."/>
            <person name="Okada M."/>
            <person name="Plessy C."/>
            <person name="Shibata K."/>
            <person name="Shiraki T."/>
            <person name="Suzuki S."/>
            <person name="Tagami M."/>
            <person name="Waki K."/>
            <person name="Watahiki A."/>
            <person name="Okamura-Oho Y."/>
            <person name="Suzuki H."/>
            <person name="Kawai J."/>
            <person name="Hayashizaki Y."/>
        </authorList>
    </citation>
    <scope>NUCLEOTIDE SEQUENCE [LARGE SCALE MRNA]</scope>
    <source>
        <strain>C57BL/6J</strain>
        <tissue>Liver</tissue>
    </source>
</reference>
<reference key="2">
    <citation type="journal article" date="2004" name="Genome Res.">
        <title>The status, quality, and expansion of the NIH full-length cDNA project: the Mammalian Gene Collection (MGC).</title>
        <authorList>
            <consortium name="The MGC Project Team"/>
        </authorList>
    </citation>
    <scope>NUCLEOTIDE SEQUENCE [LARGE SCALE MRNA]</scope>
    <source>
        <tissue>Liver</tissue>
        <tissue>Mammary tumor</tissue>
    </source>
</reference>
<reference key="3">
    <citation type="journal article" date="2010" name="Cell">
        <title>A tissue-specific atlas of mouse protein phosphorylation and expression.</title>
        <authorList>
            <person name="Huttlin E.L."/>
            <person name="Jedrychowski M.P."/>
            <person name="Elias J.E."/>
            <person name="Goswami T."/>
            <person name="Rad R."/>
            <person name="Beausoleil S.A."/>
            <person name="Villen J."/>
            <person name="Haas W."/>
            <person name="Sowa M.E."/>
            <person name="Gygi S.P."/>
        </authorList>
    </citation>
    <scope>IDENTIFICATION BY MASS SPECTROMETRY [LARGE SCALE ANALYSIS]</scope>
    <source>
        <tissue>Brown adipose tissue</tissue>
        <tissue>Heart</tissue>
        <tissue>Kidney</tissue>
        <tissue>Liver</tissue>
        <tissue>Pancreas</tissue>
    </source>
</reference>
<organism>
    <name type="scientific">Mus musculus</name>
    <name type="common">Mouse</name>
    <dbReference type="NCBI Taxonomy" id="10090"/>
    <lineage>
        <taxon>Eukaryota</taxon>
        <taxon>Metazoa</taxon>
        <taxon>Chordata</taxon>
        <taxon>Craniata</taxon>
        <taxon>Vertebrata</taxon>
        <taxon>Euteleostomi</taxon>
        <taxon>Mammalia</taxon>
        <taxon>Eutheria</taxon>
        <taxon>Euarchontoglires</taxon>
        <taxon>Glires</taxon>
        <taxon>Rodentia</taxon>
        <taxon>Myomorpha</taxon>
        <taxon>Muroidea</taxon>
        <taxon>Muridae</taxon>
        <taxon>Murinae</taxon>
        <taxon>Mus</taxon>
        <taxon>Mus</taxon>
    </lineage>
</organism>
<keyword id="KW-0143">Chaperone</keyword>
<keyword id="KW-0963">Cytoplasm</keyword>
<keyword id="KW-0342">GTP-binding</keyword>
<keyword id="KW-0378">Hydrolase</keyword>
<keyword id="KW-0496">Mitochondrion</keyword>
<keyword id="KW-0547">Nucleotide-binding</keyword>
<keyword id="KW-1185">Reference proteome</keyword>
<keyword id="KW-0809">Transit peptide</keyword>
<accession>Q8C7H1</accession>
<accession>Q8R2N3</accession>
<accession>Q8VC22</accession>
<comment type="function">
    <text evidence="1">GTPase, binds and hydrolyzes GTP (By similarity). Involved in intracellular vitamin B12 metabolism, mediates the transport of cobalamin (Cbl) into mitochondria for the final steps of adenosylcobalamin (AdoCbl) synthesis (By similarity). Functions as a G-protein chaperone that assists AdoCbl cofactor delivery from MMAB to the methylmalonyl-CoA mutase (MMUT) (By similarity). Plays a dual role as both a protectase and a reactivase for MMUT (By similarity). Protects MMUT from progressive inactivation by oxidation by decreasing the rate of the formation of the oxidized inactive cofactor hydroxocobalamin (OH2Cbl) (By similarity). Additionally acts a reactivase by promoting the replacement of OH2Cbl by the active cofactor AdoCbl, restoring the activity of MMUT in the presence and hydrolysis of GTP (By similarity).</text>
</comment>
<comment type="catalytic activity">
    <reaction evidence="1">
        <text>GTP + H2O = GDP + phosphate + H(+)</text>
        <dbReference type="Rhea" id="RHEA:19669"/>
        <dbReference type="ChEBI" id="CHEBI:15377"/>
        <dbReference type="ChEBI" id="CHEBI:15378"/>
        <dbReference type="ChEBI" id="CHEBI:37565"/>
        <dbReference type="ChEBI" id="CHEBI:43474"/>
        <dbReference type="ChEBI" id="CHEBI:58189"/>
    </reaction>
</comment>
<comment type="activity regulation">
    <text evidence="1">GTPase activity is stimulated by MMUT.</text>
</comment>
<comment type="subunit">
    <text evidence="1">Homodimer. Interacts with MMUT (the apoenzyme form); the interaction is GTP dependent.</text>
</comment>
<comment type="subcellular location">
    <subcellularLocation>
        <location evidence="1">Mitochondrion</location>
    </subcellularLocation>
    <subcellularLocation>
        <location evidence="1">Cytoplasm</location>
    </subcellularLocation>
</comment>
<comment type="similarity">
    <text evidence="3">Belongs to the SIMIBI class G3E GTPase family. ArgK/MeaB subfamily.</text>
</comment>
<protein>
    <recommendedName>
        <fullName evidence="3">Methylmalonic aciduria type A homolog, mitochondrial</fullName>
        <ecNumber evidence="1">3.6.-.-</ecNumber>
    </recommendedName>
</protein>
<name>MMAA_MOUSE</name>